<keyword id="KW-0106">Calcium</keyword>
<keyword id="KW-1015">Disulfide bond</keyword>
<keyword id="KW-0378">Hydrolase</keyword>
<keyword id="KW-0479">Metal-binding</keyword>
<keyword id="KW-0482">Metalloprotease</keyword>
<keyword id="KW-0645">Protease</keyword>
<keyword id="KW-0964">Secreted</keyword>
<keyword id="KW-0800">Toxin</keyword>
<keyword id="KW-0862">Zinc</keyword>
<comment type="function">
    <text evidence="1">Acts as a metalloprotease. Penetrates intact tissue and specifically cleaves the vesicle-associated membrane protein 2 (VAMP2) (part of the SNARE complex) involved in pancreatic secretion, thus disrupting the normal vesicular traffic (By similarity).</text>
</comment>
<comment type="cofactor">
    <cofactor evidence="1">
        <name>Zn(2+)</name>
        <dbReference type="ChEBI" id="CHEBI:29105"/>
    </cofactor>
    <text evidence="1">Binds 1 zinc ion per subunit.</text>
</comment>
<comment type="activity regulation">
    <text evidence="1">Inhibited by EDTA.</text>
</comment>
<comment type="subcellular location">
    <subcellularLocation>
        <location evidence="1">Secreted</location>
    </subcellularLocation>
</comment>
<comment type="tissue specificity">
    <text>Expressed by the venom gland.</text>
</comment>
<comment type="PTM">
    <text evidence="3">Contains several disulfide bonds.</text>
</comment>
<comment type="similarity">
    <text evidence="3">Belongs to the venom metalloproteinase (M12B) family.</text>
</comment>
<sequence>DDCIVVEYYIVTDSAFTKRFKSNSALTKYVTVMFTGVQNLMDTLELGIGVRLLGVTAFNEETEPSFIIDNLISGPPEAFDPDVLITAMSEYYCNHQIGLAKNTDLIFLITARGMGDPREDGTVDINTAGIANSAGVYKPCLKAGVATDDSDYNERVDTLAHESVHLLGSPHDGEGPDQVSLEGSPGAANCPAKAGYIMGNRNDKNKYKFSPCTKKCVEYLLSKPAASCIFEQCSGF</sequence>
<evidence type="ECO:0000250" key="1"/>
<evidence type="ECO:0000255" key="2">
    <source>
        <dbReference type="PROSITE-ProRule" id="PRU00276"/>
    </source>
</evidence>
<evidence type="ECO:0000305" key="3"/>
<protein>
    <recommendedName>
        <fullName>Venom metalloproteinase antarease-like TfasMP_A</fullName>
        <shortName>VMPA</shortName>
        <ecNumber>3.4.24.-</ecNumber>
    </recommendedName>
</protein>
<dbReference type="EC" id="3.4.24.-"/>
<dbReference type="EMBL" id="KC693044">
    <property type="protein sequence ID" value="AHE40597.1"/>
    <property type="molecule type" value="mRNA"/>
</dbReference>
<dbReference type="SMR" id="V9Z7R6"/>
<dbReference type="MEROPS" id="M12.191"/>
<dbReference type="GO" id="GO:0005576">
    <property type="term" value="C:extracellular region"/>
    <property type="evidence" value="ECO:0007669"/>
    <property type="project" value="UniProtKB-SubCell"/>
</dbReference>
<dbReference type="GO" id="GO:0046872">
    <property type="term" value="F:metal ion binding"/>
    <property type="evidence" value="ECO:0007669"/>
    <property type="project" value="UniProtKB-KW"/>
</dbReference>
<dbReference type="GO" id="GO:0004222">
    <property type="term" value="F:metalloendopeptidase activity"/>
    <property type="evidence" value="ECO:0007669"/>
    <property type="project" value="InterPro"/>
</dbReference>
<dbReference type="GO" id="GO:0090729">
    <property type="term" value="F:toxin activity"/>
    <property type="evidence" value="ECO:0007669"/>
    <property type="project" value="UniProtKB-KW"/>
</dbReference>
<dbReference type="GO" id="GO:0006509">
    <property type="term" value="P:membrane protein ectodomain proteolysis"/>
    <property type="evidence" value="ECO:0007669"/>
    <property type="project" value="TreeGrafter"/>
</dbReference>
<dbReference type="Gene3D" id="3.40.390.10">
    <property type="entry name" value="Collagenase (Catalytic Domain)"/>
    <property type="match status" value="1"/>
</dbReference>
<dbReference type="InterPro" id="IPR024079">
    <property type="entry name" value="MetalloPept_cat_dom_sf"/>
</dbReference>
<dbReference type="InterPro" id="IPR001590">
    <property type="entry name" value="Peptidase_M12B"/>
</dbReference>
<dbReference type="PANTHER" id="PTHR11905">
    <property type="entry name" value="ADAM A DISINTEGRIN AND METALLOPROTEASE DOMAIN"/>
    <property type="match status" value="1"/>
</dbReference>
<dbReference type="PANTHER" id="PTHR11905:SF159">
    <property type="entry name" value="ADAM METALLOPROTEASE"/>
    <property type="match status" value="1"/>
</dbReference>
<dbReference type="Pfam" id="PF13688">
    <property type="entry name" value="Reprolysin_5"/>
    <property type="match status" value="1"/>
</dbReference>
<dbReference type="SUPFAM" id="SSF55486">
    <property type="entry name" value="Metalloproteases ('zincins'), catalytic domain"/>
    <property type="match status" value="1"/>
</dbReference>
<dbReference type="PROSITE" id="PS50215">
    <property type="entry name" value="ADAM_MEPRO"/>
    <property type="match status" value="1"/>
</dbReference>
<proteinExistence type="evidence at transcript level"/>
<feature type="chain" id="PRO_0000429181" description="Venom metalloproteinase antarease-like TfasMP_A">
    <location>
        <begin position="1"/>
        <end position="236"/>
    </location>
</feature>
<feature type="domain" description="Peptidase M12B" evidence="2">
    <location>
        <begin position="4"/>
        <end position="232"/>
    </location>
</feature>
<feature type="active site" evidence="2">
    <location>
        <position position="162"/>
    </location>
</feature>
<feature type="binding site" evidence="2">
    <location>
        <position position="161"/>
    </location>
    <ligand>
        <name>Zn(2+)</name>
        <dbReference type="ChEBI" id="CHEBI:29105"/>
        <note>catalytic</note>
    </ligand>
</feature>
<feature type="binding site" evidence="2">
    <location>
        <position position="165"/>
    </location>
    <ligand>
        <name>Zn(2+)</name>
        <dbReference type="ChEBI" id="CHEBI:29105"/>
        <note>catalytic</note>
    </ligand>
</feature>
<feature type="binding site" evidence="2">
    <location>
        <position position="171"/>
    </location>
    <ligand>
        <name>Zn(2+)</name>
        <dbReference type="ChEBI" id="CHEBI:29105"/>
        <note>catalytic</note>
    </ligand>
</feature>
<organism>
    <name type="scientific">Tityus fasciolatus</name>
    <name type="common">Central Brazilian scorpion</name>
    <dbReference type="NCBI Taxonomy" id="203543"/>
    <lineage>
        <taxon>Eukaryota</taxon>
        <taxon>Metazoa</taxon>
        <taxon>Ecdysozoa</taxon>
        <taxon>Arthropoda</taxon>
        <taxon>Chelicerata</taxon>
        <taxon>Arachnida</taxon>
        <taxon>Scorpiones</taxon>
        <taxon>Buthida</taxon>
        <taxon>Buthoidea</taxon>
        <taxon>Buthidae</taxon>
        <taxon>Tityus</taxon>
    </lineage>
</organism>
<accession>V9Z7R6</accession>
<name>VMPA1_TITFA</name>
<reference key="1">
    <citation type="journal article" date="2014" name="Biochim. Biophys. Acta">
        <title>Antarease-like Zn-metalloproteases are ubiquitous in the venom of different scorpion genera.</title>
        <authorList>
            <person name="Ortiz E."/>
            <person name="Rendon-Anaya M."/>
            <person name="Rego S.C."/>
            <person name="Schwartz E.F."/>
            <person name="Possani L.D."/>
        </authorList>
    </citation>
    <scope>NUCLEOTIDE SEQUENCE [MRNA]</scope>
    <source>
        <tissue>Venom gland</tissue>
    </source>
</reference>